<comment type="function">
    <text evidence="1">Structural protein that makes short spikes at the surface of the virus. Contains receptor binding and receptor-destroying activities. Mediates de-O-acetylation of N-acetyl-9-O-acetylneuraminic acid, which is probably the receptor determinant recognized by the virus on the surface of erythrocytes and susceptible cells. This receptor-destroying activity is important for virus release as it probably helps preventing self-aggregation and ensures the efficient spread of the progeny virus from cell to cell. May serve as a secondary viral attachment protein for initiating infection, the spike protein being the major one. Seems to be a 'luxury' protein that is not absolutely necessary for virus infection in culture. However, its presence in the virus may alter its pathogenicity. May become a target for both the humoral and the cellular branches of the immune system (By similarity).</text>
</comment>
<comment type="catalytic activity">
    <reaction>
        <text>N-acetyl-9-O-acetylneuraminate + H2O = N-acetylneuraminate + acetate + H(+)</text>
        <dbReference type="Rhea" id="RHEA:22600"/>
        <dbReference type="ChEBI" id="CHEBI:15377"/>
        <dbReference type="ChEBI" id="CHEBI:15378"/>
        <dbReference type="ChEBI" id="CHEBI:28999"/>
        <dbReference type="ChEBI" id="CHEBI:30089"/>
        <dbReference type="ChEBI" id="CHEBI:35418"/>
        <dbReference type="EC" id="3.1.1.53"/>
    </reaction>
</comment>
<comment type="catalytic activity">
    <reaction>
        <text>N-acetyl-4-O-acetylneuraminate + H2O = N-acetylneuraminate + acetate + H(+)</text>
        <dbReference type="Rhea" id="RHEA:25564"/>
        <dbReference type="ChEBI" id="CHEBI:15377"/>
        <dbReference type="ChEBI" id="CHEBI:15378"/>
        <dbReference type="ChEBI" id="CHEBI:29006"/>
        <dbReference type="ChEBI" id="CHEBI:30089"/>
        <dbReference type="ChEBI" id="CHEBI:35418"/>
        <dbReference type="EC" id="3.1.1.53"/>
    </reaction>
</comment>
<comment type="subunit">
    <text evidence="1">Homodimer.</text>
</comment>
<comment type="subcellular location">
    <subcellularLocation>
        <location evidence="3">Virion membrane</location>
        <topology evidence="3">Single-pass type I membrane protein</topology>
    </subcellularLocation>
    <subcellularLocation>
        <location evidence="3">Host cell membrane</location>
        <topology evidence="3">Single-pass type I membrane protein</topology>
    </subcellularLocation>
    <text evidence="1">In infected cells becomes incorporated into the envelope of virions during virus assembly at the endoplasmic reticulum and cis Golgi. However, some may escape incorporation into virions and subsequently migrate to the cell surface (By similarity).</text>
</comment>
<comment type="PTM">
    <text evidence="1">N-glycosylated.</text>
</comment>
<comment type="similarity">
    <text evidence="3">Belongs to the influenza type C/coronaviruses hemagglutinin-esterase family.</text>
</comment>
<name>HEMA_HUTV</name>
<reference key="1">
    <citation type="journal article" date="1999" name="Virus Res.">
        <title>The novel hemagglutinin-esterase genes of human torovirus and Breda virus.</title>
        <authorList>
            <person name="Duckmanton L."/>
            <person name="Tellier R."/>
            <person name="Richardson C."/>
            <person name="Petric M."/>
        </authorList>
    </citation>
    <scope>NUCLEOTIDE SEQUENCE [MRNA]</scope>
    <scope>RETRACTED PAPER</scope>
</reference>
<reference key="2">
    <citation type="journal article" date="2001" name="Virus Res.">
        <authorList>
            <person name="Duckmanton L."/>
            <person name="Tellier R."/>
            <person name="Richardson C."/>
            <person name="Petric M."/>
        </authorList>
    </citation>
    <scope>RETRACTION NOTICE OF PUBMED:10518710</scope>
</reference>
<feature type="signal peptide" evidence="2">
    <location>
        <begin position="1"/>
        <end position="14"/>
    </location>
</feature>
<feature type="chain" id="PRO_0000045400" description="Hemagglutinin-esterase">
    <location>
        <begin position="15"/>
        <end position="416"/>
    </location>
</feature>
<feature type="topological domain" description="Virion surface" evidence="2">
    <location>
        <begin position="15"/>
        <end position="393"/>
    </location>
</feature>
<feature type="transmembrane region" description="Helical" evidence="2">
    <location>
        <begin position="394"/>
        <end position="414"/>
    </location>
</feature>
<feature type="topological domain" description="Intravirion" evidence="2">
    <location>
        <begin position="415"/>
        <end position="416"/>
    </location>
</feature>
<feature type="region of interest" description="Esterase domain first part" evidence="1">
    <location>
        <begin position="4"/>
        <end position="121"/>
    </location>
</feature>
<feature type="region of interest" description="Receptor binding" evidence="1">
    <location>
        <begin position="122"/>
        <end position="263"/>
    </location>
</feature>
<feature type="region of interest" description="Esterase domain second part" evidence="1">
    <location>
        <begin position="264"/>
        <end position="379"/>
    </location>
</feature>
<feature type="active site" description="Nucleophile" evidence="1">
    <location>
        <position position="37"/>
    </location>
</feature>
<feature type="active site" description="Charge relay system" evidence="1">
    <location>
        <position position="328"/>
    </location>
</feature>
<feature type="glycosylation site" description="N-linked (GlcNAc...) asparagine; by host" evidence="2">
    <location>
        <position position="59"/>
    </location>
</feature>
<feature type="glycosylation site" description="N-linked (GlcNAc...) asparagine; by host" evidence="2">
    <location>
        <position position="76"/>
    </location>
</feature>
<feature type="glycosylation site" description="N-linked (GlcNAc...) asparagine; by host" evidence="2">
    <location>
        <position position="257"/>
    </location>
</feature>
<feature type="glycosylation site" description="N-linked (GlcNAc...) asparagine; by host" evidence="2">
    <location>
        <position position="278"/>
    </location>
</feature>
<feature type="glycosylation site" description="N-linked (GlcNAc...) asparagine; by host" evidence="2">
    <location>
        <position position="294"/>
    </location>
</feature>
<feature type="glycosylation site" description="N-linked (GlcNAc...) asparagine; by host" evidence="2">
    <location>
        <position position="322"/>
    </location>
</feature>
<feature type="glycosylation site" description="N-linked (GlcNAc...) asparagine; by host" evidence="2">
    <location>
        <position position="343"/>
    </location>
</feature>
<feature type="disulfide bond" evidence="1">
    <location>
        <begin position="41"/>
        <end position="57"/>
    </location>
</feature>
<feature type="disulfide bond" evidence="1">
    <location>
        <begin position="88"/>
        <end position="136"/>
    </location>
</feature>
<feature type="disulfide bond" evidence="1">
    <location>
        <begin position="108"/>
        <end position="156"/>
    </location>
</feature>
<feature type="disulfide bond" evidence="1">
    <location>
        <begin position="192"/>
        <end position="273"/>
    </location>
</feature>
<feature type="disulfide bond" evidence="1">
    <location>
        <begin position="200"/>
        <end position="246"/>
    </location>
</feature>
<feature type="disulfide bond" evidence="1">
    <location>
        <begin position="206"/>
        <end position="213"/>
    </location>
</feature>
<feature type="disulfide bond" evidence="1">
    <location>
        <begin position="304"/>
        <end position="309"/>
    </location>
</feature>
<feature type="disulfide bond" evidence="1">
    <location>
        <begin position="346"/>
        <end position="371"/>
    </location>
</feature>
<dbReference type="EC" id="3.1.1.53"/>
<dbReference type="EMBL" id="AF159585">
    <property type="protein sequence ID" value="AAF00614.1"/>
    <property type="molecule type" value="mRNA"/>
</dbReference>
<dbReference type="SMR" id="Q9Q9G3"/>
<dbReference type="GlyCosmos" id="Q9Q9G3">
    <property type="glycosylation" value="7 sites, No reported glycans"/>
</dbReference>
<dbReference type="GO" id="GO:0020002">
    <property type="term" value="C:host cell plasma membrane"/>
    <property type="evidence" value="ECO:0007669"/>
    <property type="project" value="UniProtKB-SubCell"/>
</dbReference>
<dbReference type="GO" id="GO:0016020">
    <property type="term" value="C:membrane"/>
    <property type="evidence" value="ECO:0007669"/>
    <property type="project" value="UniProtKB-KW"/>
</dbReference>
<dbReference type="GO" id="GO:0019031">
    <property type="term" value="C:viral envelope"/>
    <property type="evidence" value="ECO:0007669"/>
    <property type="project" value="UniProtKB-KW"/>
</dbReference>
<dbReference type="GO" id="GO:0055036">
    <property type="term" value="C:virion membrane"/>
    <property type="evidence" value="ECO:0007669"/>
    <property type="project" value="UniProtKB-SubCell"/>
</dbReference>
<dbReference type="GO" id="GO:0046789">
    <property type="term" value="F:host cell surface receptor binding"/>
    <property type="evidence" value="ECO:0007669"/>
    <property type="project" value="InterPro"/>
</dbReference>
<dbReference type="GO" id="GO:0106331">
    <property type="term" value="F:sialate 4-O-acetylesterase activity"/>
    <property type="evidence" value="ECO:0007669"/>
    <property type="project" value="RHEA"/>
</dbReference>
<dbReference type="GO" id="GO:0106330">
    <property type="term" value="F:sialate 9-O-acetylesterase activity"/>
    <property type="evidence" value="ECO:0007669"/>
    <property type="project" value="RHEA"/>
</dbReference>
<dbReference type="GO" id="GO:0019064">
    <property type="term" value="P:fusion of virus membrane with host plasma membrane"/>
    <property type="evidence" value="ECO:0007669"/>
    <property type="project" value="InterPro"/>
</dbReference>
<dbReference type="InterPro" id="IPR008980">
    <property type="entry name" value="Capsid_hemagglutn"/>
</dbReference>
<dbReference type="InterPro" id="IPR007142">
    <property type="entry name" value="Hemagglutn-estrase_core"/>
</dbReference>
<dbReference type="InterPro" id="IPR003860">
    <property type="entry name" value="Hemagglutn-estrase_hemagglutn"/>
</dbReference>
<dbReference type="Pfam" id="PF03996">
    <property type="entry name" value="Hema_esterase"/>
    <property type="match status" value="1"/>
</dbReference>
<dbReference type="Pfam" id="PF02710">
    <property type="entry name" value="Hema_HEFG"/>
    <property type="match status" value="1"/>
</dbReference>
<dbReference type="SUPFAM" id="SSF52266">
    <property type="entry name" value="SGNH hydrolase"/>
    <property type="match status" value="1"/>
</dbReference>
<dbReference type="SUPFAM" id="SSF49818">
    <property type="entry name" value="Viral protein domain"/>
    <property type="match status" value="1"/>
</dbReference>
<sequence>MLSLILFFPSFAFAVTPVTPYFGPLYITFNCCLFGDSRSDCTKVQSPMSLDNPQNFCPNFSLKSSSSMFFSIHYNNHSSLVLFDNFNCRIEKVYYNGVNLSPRNQYSCYDEGVDSYMELKTSFNIKLNQMATILRCIKLIQLKARSSFTTLQDVVCRTNKYLPNNPTFALLSDTVPTWVQFVLPDLSGKTICIKYLVPFCHLNHGCFTAGSSCPPFGVSYVSDSFNYGFNDATPYIGLAESHDNVCDYLFVEAGTHNASIVGNFLFYPTKSYCFNTMNFTVPVQAIQSIWSEGNESDDAIAEACKPPFCIYYSKTTPYTVTNGSNADHRDDEVRMMVRGLLYNSSCISAQGSTPLALYSTAMLYAPIYGSCPQYVKLFDTSGSESVDVISSSYFVATWVLLVVVVILIFVIISFFC</sequence>
<proteinExistence type="evidence at transcript level"/>
<keyword id="KW-1015">Disulfide bond</keyword>
<keyword id="KW-0325">Glycoprotein</keyword>
<keyword id="KW-0348">Hemagglutinin</keyword>
<keyword id="KW-1032">Host cell membrane</keyword>
<keyword id="KW-1043">Host membrane</keyword>
<keyword id="KW-0378">Hydrolase</keyword>
<keyword id="KW-0472">Membrane</keyword>
<keyword id="KW-0732">Signal</keyword>
<keyword id="KW-0812">Transmembrane</keyword>
<keyword id="KW-1133">Transmembrane helix</keyword>
<keyword id="KW-0261">Viral envelope protein</keyword>
<keyword id="KW-0946">Virion</keyword>
<organismHost>
    <name type="scientific">Homo sapiens</name>
    <name type="common">Human</name>
    <dbReference type="NCBI Taxonomy" id="9606"/>
</organismHost>
<evidence type="ECO:0000250" key="1"/>
<evidence type="ECO:0000255" key="2"/>
<evidence type="ECO:0000305" key="3"/>
<gene>
    <name type="primary">HE</name>
</gene>
<organism>
    <name type="scientific">Human torovirus</name>
    <name type="common">HuTV</name>
    <dbReference type="NCBI Taxonomy" id="67605"/>
    <lineage>
        <taxon>Viruses</taxon>
        <taxon>Riboviria</taxon>
        <taxon>Orthornavirae</taxon>
        <taxon>Pisuviricota</taxon>
        <taxon>Pisoniviricetes</taxon>
        <taxon>Nidovirales</taxon>
        <taxon>Tornidovirineae</taxon>
        <taxon>Tobaniviridae</taxon>
        <taxon>Torovirinae</taxon>
        <taxon>Torovirus</taxon>
    </lineage>
</organism>
<accession>Q9Q9G3</accession>
<protein>
    <recommendedName>
        <fullName>Hemagglutinin-esterase</fullName>
        <shortName>HE protein</shortName>
        <ecNumber>3.1.1.53</ecNumber>
    </recommendedName>
    <alternativeName>
        <fullName>E3 glycoprotein</fullName>
    </alternativeName>
</protein>